<gene>
    <name evidence="1" type="primary">rplB</name>
    <name type="ordered locus">Haur_4918</name>
</gene>
<protein>
    <recommendedName>
        <fullName evidence="1">Large ribosomal subunit protein uL2</fullName>
    </recommendedName>
    <alternativeName>
        <fullName evidence="3">50S ribosomal protein L2</fullName>
    </alternativeName>
</protein>
<keyword id="KW-0687">Ribonucleoprotein</keyword>
<keyword id="KW-0689">Ribosomal protein</keyword>
<keyword id="KW-0694">RNA-binding</keyword>
<keyword id="KW-0699">rRNA-binding</keyword>
<reference key="1">
    <citation type="journal article" date="2011" name="Stand. Genomic Sci.">
        <title>Complete genome sequence of the filamentous gliding predatory bacterium Herpetosiphon aurantiacus type strain (114-95(T)).</title>
        <authorList>
            <person name="Kiss H."/>
            <person name="Nett M."/>
            <person name="Domin N."/>
            <person name="Martin K."/>
            <person name="Maresca J.A."/>
            <person name="Copeland A."/>
            <person name="Lapidus A."/>
            <person name="Lucas S."/>
            <person name="Berry K.W."/>
            <person name="Glavina Del Rio T."/>
            <person name="Dalin E."/>
            <person name="Tice H."/>
            <person name="Pitluck S."/>
            <person name="Richardson P."/>
            <person name="Bruce D."/>
            <person name="Goodwin L."/>
            <person name="Han C."/>
            <person name="Detter J.C."/>
            <person name="Schmutz J."/>
            <person name="Brettin T."/>
            <person name="Land M."/>
            <person name="Hauser L."/>
            <person name="Kyrpides N.C."/>
            <person name="Ivanova N."/>
            <person name="Goeker M."/>
            <person name="Woyke T."/>
            <person name="Klenk H.P."/>
            <person name="Bryant D.A."/>
        </authorList>
    </citation>
    <scope>NUCLEOTIDE SEQUENCE [LARGE SCALE GENOMIC DNA]</scope>
    <source>
        <strain>ATCC 23779 / DSM 785 / 114-95</strain>
    </source>
</reference>
<comment type="function">
    <text evidence="1">One of the primary rRNA binding proteins. Required for association of the 30S and 50S subunits to form the 70S ribosome, for tRNA binding and peptide bond formation. It has been suggested to have peptidyltransferase activity; this is somewhat controversial. Makes several contacts with the 16S rRNA in the 70S ribosome.</text>
</comment>
<comment type="subunit">
    <text evidence="1">Part of the 50S ribosomal subunit. Forms a bridge to the 30S subunit in the 70S ribosome.</text>
</comment>
<comment type="similarity">
    <text evidence="1">Belongs to the universal ribosomal protein uL2 family.</text>
</comment>
<proteinExistence type="inferred from homology"/>
<sequence length="275" mass="30441">MGIKRYKPTSPGRRGMTVSDFAEITKFEPEKSLTEPLKKHAGRNNHGHITTRHRGGGHKRRYRLIDFKRKKFDIPAKVAGIEYDPNRSANIALLHYTDGEKRYIIAPLGLKVGDTLMAGPNAEIRVGNALPLANIPIGSQIHNIELTPGRGGQLVRSAGNTAQLMAREGNYATVRLPSGEMRMVHIKCMATLGQVGNVDHQNIMIGKAGRSRWLGRRPVVRGSAMNPVDHPHGGGEGRAPTGMNPKTKWGKPAMGKKTRHNPRTQRFIVRTRKQK</sequence>
<feature type="chain" id="PRO_1000141564" description="Large ribosomal subunit protein uL2">
    <location>
        <begin position="1"/>
        <end position="275"/>
    </location>
</feature>
<feature type="region of interest" description="Disordered" evidence="2">
    <location>
        <begin position="38"/>
        <end position="59"/>
    </location>
</feature>
<feature type="region of interest" description="Disordered" evidence="2">
    <location>
        <begin position="222"/>
        <end position="275"/>
    </location>
</feature>
<feature type="compositionally biased region" description="Basic residues" evidence="2">
    <location>
        <begin position="39"/>
        <end position="59"/>
    </location>
</feature>
<feature type="compositionally biased region" description="Basic residues" evidence="2">
    <location>
        <begin position="254"/>
        <end position="275"/>
    </location>
</feature>
<dbReference type="EMBL" id="CP000875">
    <property type="protein sequence ID" value="ABX07548.1"/>
    <property type="molecule type" value="Genomic_DNA"/>
</dbReference>
<dbReference type="SMR" id="A9B415"/>
<dbReference type="FunCoup" id="A9B415">
    <property type="interactions" value="486"/>
</dbReference>
<dbReference type="STRING" id="316274.Haur_4918"/>
<dbReference type="KEGG" id="hau:Haur_4918"/>
<dbReference type="eggNOG" id="COG0090">
    <property type="taxonomic scope" value="Bacteria"/>
</dbReference>
<dbReference type="HOGENOM" id="CLU_036235_2_1_0"/>
<dbReference type="InParanoid" id="A9B415"/>
<dbReference type="Proteomes" id="UP000000787">
    <property type="component" value="Chromosome"/>
</dbReference>
<dbReference type="GO" id="GO:0015934">
    <property type="term" value="C:large ribosomal subunit"/>
    <property type="evidence" value="ECO:0007669"/>
    <property type="project" value="InterPro"/>
</dbReference>
<dbReference type="GO" id="GO:0019843">
    <property type="term" value="F:rRNA binding"/>
    <property type="evidence" value="ECO:0007669"/>
    <property type="project" value="UniProtKB-UniRule"/>
</dbReference>
<dbReference type="GO" id="GO:0003735">
    <property type="term" value="F:structural constituent of ribosome"/>
    <property type="evidence" value="ECO:0007669"/>
    <property type="project" value="InterPro"/>
</dbReference>
<dbReference type="GO" id="GO:0016740">
    <property type="term" value="F:transferase activity"/>
    <property type="evidence" value="ECO:0007669"/>
    <property type="project" value="InterPro"/>
</dbReference>
<dbReference type="GO" id="GO:0002181">
    <property type="term" value="P:cytoplasmic translation"/>
    <property type="evidence" value="ECO:0007669"/>
    <property type="project" value="TreeGrafter"/>
</dbReference>
<dbReference type="FunFam" id="2.30.30.30:FF:000001">
    <property type="entry name" value="50S ribosomal protein L2"/>
    <property type="match status" value="1"/>
</dbReference>
<dbReference type="FunFam" id="2.40.50.140:FF:000003">
    <property type="entry name" value="50S ribosomal protein L2"/>
    <property type="match status" value="1"/>
</dbReference>
<dbReference type="FunFam" id="4.10.950.10:FF:000001">
    <property type="entry name" value="50S ribosomal protein L2"/>
    <property type="match status" value="1"/>
</dbReference>
<dbReference type="Gene3D" id="2.30.30.30">
    <property type="match status" value="1"/>
</dbReference>
<dbReference type="Gene3D" id="2.40.50.140">
    <property type="entry name" value="Nucleic acid-binding proteins"/>
    <property type="match status" value="1"/>
</dbReference>
<dbReference type="Gene3D" id="4.10.950.10">
    <property type="entry name" value="Ribosomal protein L2, domain 3"/>
    <property type="match status" value="1"/>
</dbReference>
<dbReference type="HAMAP" id="MF_01320_B">
    <property type="entry name" value="Ribosomal_uL2_B"/>
    <property type="match status" value="1"/>
</dbReference>
<dbReference type="InterPro" id="IPR012340">
    <property type="entry name" value="NA-bd_OB-fold"/>
</dbReference>
<dbReference type="InterPro" id="IPR014722">
    <property type="entry name" value="Rib_uL2_dom2"/>
</dbReference>
<dbReference type="InterPro" id="IPR002171">
    <property type="entry name" value="Ribosomal_uL2"/>
</dbReference>
<dbReference type="InterPro" id="IPR005880">
    <property type="entry name" value="Ribosomal_uL2_bac/org-type"/>
</dbReference>
<dbReference type="InterPro" id="IPR022669">
    <property type="entry name" value="Ribosomal_uL2_C"/>
</dbReference>
<dbReference type="InterPro" id="IPR022671">
    <property type="entry name" value="Ribosomal_uL2_CS"/>
</dbReference>
<dbReference type="InterPro" id="IPR014726">
    <property type="entry name" value="Ribosomal_uL2_dom3"/>
</dbReference>
<dbReference type="InterPro" id="IPR022666">
    <property type="entry name" value="Ribosomal_uL2_RNA-bd_dom"/>
</dbReference>
<dbReference type="InterPro" id="IPR008991">
    <property type="entry name" value="Translation_prot_SH3-like_sf"/>
</dbReference>
<dbReference type="NCBIfam" id="TIGR01171">
    <property type="entry name" value="rplB_bact"/>
    <property type="match status" value="1"/>
</dbReference>
<dbReference type="PANTHER" id="PTHR13691:SF5">
    <property type="entry name" value="LARGE RIBOSOMAL SUBUNIT PROTEIN UL2M"/>
    <property type="match status" value="1"/>
</dbReference>
<dbReference type="PANTHER" id="PTHR13691">
    <property type="entry name" value="RIBOSOMAL PROTEIN L2"/>
    <property type="match status" value="1"/>
</dbReference>
<dbReference type="Pfam" id="PF00181">
    <property type="entry name" value="Ribosomal_L2"/>
    <property type="match status" value="1"/>
</dbReference>
<dbReference type="Pfam" id="PF03947">
    <property type="entry name" value="Ribosomal_L2_C"/>
    <property type="match status" value="1"/>
</dbReference>
<dbReference type="PIRSF" id="PIRSF002158">
    <property type="entry name" value="Ribosomal_L2"/>
    <property type="match status" value="1"/>
</dbReference>
<dbReference type="SMART" id="SM01383">
    <property type="entry name" value="Ribosomal_L2"/>
    <property type="match status" value="1"/>
</dbReference>
<dbReference type="SMART" id="SM01382">
    <property type="entry name" value="Ribosomal_L2_C"/>
    <property type="match status" value="1"/>
</dbReference>
<dbReference type="SUPFAM" id="SSF50249">
    <property type="entry name" value="Nucleic acid-binding proteins"/>
    <property type="match status" value="1"/>
</dbReference>
<dbReference type="SUPFAM" id="SSF50104">
    <property type="entry name" value="Translation proteins SH3-like domain"/>
    <property type="match status" value="1"/>
</dbReference>
<dbReference type="PROSITE" id="PS00467">
    <property type="entry name" value="RIBOSOMAL_L2"/>
    <property type="match status" value="1"/>
</dbReference>
<organism>
    <name type="scientific">Herpetosiphon aurantiacus (strain ATCC 23779 / DSM 785 / 114-95)</name>
    <dbReference type="NCBI Taxonomy" id="316274"/>
    <lineage>
        <taxon>Bacteria</taxon>
        <taxon>Bacillati</taxon>
        <taxon>Chloroflexota</taxon>
        <taxon>Chloroflexia</taxon>
        <taxon>Herpetosiphonales</taxon>
        <taxon>Herpetosiphonaceae</taxon>
        <taxon>Herpetosiphon</taxon>
    </lineage>
</organism>
<evidence type="ECO:0000255" key="1">
    <source>
        <dbReference type="HAMAP-Rule" id="MF_01320"/>
    </source>
</evidence>
<evidence type="ECO:0000256" key="2">
    <source>
        <dbReference type="SAM" id="MobiDB-lite"/>
    </source>
</evidence>
<evidence type="ECO:0000305" key="3"/>
<accession>A9B415</accession>
<name>RL2_HERA2</name>